<dbReference type="EMBL" id="CP000727">
    <property type="protein sequence ID" value="ABS38071.1"/>
    <property type="molecule type" value="Genomic_DNA"/>
</dbReference>
<dbReference type="EMBL" id="AM412317">
    <property type="protein sequence ID" value="CAL84516.1"/>
    <property type="molecule type" value="Genomic_DNA"/>
</dbReference>
<dbReference type="RefSeq" id="WP_003357777.1">
    <property type="nucleotide sequence ID" value="NC_009698.1"/>
</dbReference>
<dbReference type="RefSeq" id="YP_001255446.1">
    <property type="nucleotide sequence ID" value="NC_009495.1"/>
</dbReference>
<dbReference type="RefSeq" id="YP_001388682.1">
    <property type="nucleotide sequence ID" value="NC_009698.1"/>
</dbReference>
<dbReference type="SMR" id="A5I634"/>
<dbReference type="GeneID" id="92939674"/>
<dbReference type="KEGG" id="cbh:CLC_2849"/>
<dbReference type="KEGG" id="cbo:CBO2953"/>
<dbReference type="PATRIC" id="fig|413999.7.peg.2932"/>
<dbReference type="HOGENOM" id="CLU_159258_1_2_9"/>
<dbReference type="PRO" id="PR:A5I634"/>
<dbReference type="Proteomes" id="UP000001986">
    <property type="component" value="Chromosome"/>
</dbReference>
<dbReference type="GO" id="GO:1990904">
    <property type="term" value="C:ribonucleoprotein complex"/>
    <property type="evidence" value="ECO:0007669"/>
    <property type="project" value="UniProtKB-KW"/>
</dbReference>
<dbReference type="GO" id="GO:0005840">
    <property type="term" value="C:ribosome"/>
    <property type="evidence" value="ECO:0007669"/>
    <property type="project" value="UniProtKB-KW"/>
</dbReference>
<dbReference type="GO" id="GO:0003735">
    <property type="term" value="F:structural constituent of ribosome"/>
    <property type="evidence" value="ECO:0007669"/>
    <property type="project" value="InterPro"/>
</dbReference>
<dbReference type="GO" id="GO:0006412">
    <property type="term" value="P:translation"/>
    <property type="evidence" value="ECO:0007669"/>
    <property type="project" value="UniProtKB-UniRule"/>
</dbReference>
<dbReference type="Gene3D" id="1.20.5.1150">
    <property type="entry name" value="Ribosomal protein S8"/>
    <property type="match status" value="1"/>
</dbReference>
<dbReference type="HAMAP" id="MF_00358">
    <property type="entry name" value="Ribosomal_bS21"/>
    <property type="match status" value="1"/>
</dbReference>
<dbReference type="InterPro" id="IPR001911">
    <property type="entry name" value="Ribosomal_bS21"/>
</dbReference>
<dbReference type="InterPro" id="IPR018278">
    <property type="entry name" value="Ribosomal_bS21_CS"/>
</dbReference>
<dbReference type="InterPro" id="IPR038380">
    <property type="entry name" value="Ribosomal_bS21_sf"/>
</dbReference>
<dbReference type="NCBIfam" id="TIGR00030">
    <property type="entry name" value="S21p"/>
    <property type="match status" value="1"/>
</dbReference>
<dbReference type="PANTHER" id="PTHR21109">
    <property type="entry name" value="MITOCHONDRIAL 28S RIBOSOMAL PROTEIN S21"/>
    <property type="match status" value="1"/>
</dbReference>
<dbReference type="PANTHER" id="PTHR21109:SF22">
    <property type="entry name" value="SMALL RIBOSOMAL SUBUNIT PROTEIN BS21"/>
    <property type="match status" value="1"/>
</dbReference>
<dbReference type="Pfam" id="PF01165">
    <property type="entry name" value="Ribosomal_S21"/>
    <property type="match status" value="1"/>
</dbReference>
<dbReference type="PRINTS" id="PR00976">
    <property type="entry name" value="RIBOSOMALS21"/>
</dbReference>
<dbReference type="PROSITE" id="PS01181">
    <property type="entry name" value="RIBOSOMAL_S21"/>
    <property type="match status" value="1"/>
</dbReference>
<feature type="chain" id="PRO_1000005110" description="Small ribosomal subunit protein bS21">
    <location>
        <begin position="1"/>
        <end position="58"/>
    </location>
</feature>
<feature type="region of interest" description="Disordered" evidence="2">
    <location>
        <begin position="32"/>
        <end position="58"/>
    </location>
</feature>
<feature type="compositionally biased region" description="Basic and acidic residues" evidence="2">
    <location>
        <begin position="32"/>
        <end position="42"/>
    </location>
</feature>
<feature type="compositionally biased region" description="Basic residues" evidence="2">
    <location>
        <begin position="43"/>
        <end position="58"/>
    </location>
</feature>
<accession>A5I634</accession>
<accession>A7G7B7</accession>
<comment type="similarity">
    <text evidence="1">Belongs to the bacterial ribosomal protein bS21 family.</text>
</comment>
<name>RS21_CLOBH</name>
<gene>
    <name evidence="1" type="primary">rpsU</name>
    <name type="ordered locus">CBO2953</name>
    <name type="ordered locus">CLC_2849</name>
</gene>
<evidence type="ECO:0000255" key="1">
    <source>
        <dbReference type="HAMAP-Rule" id="MF_00358"/>
    </source>
</evidence>
<evidence type="ECO:0000256" key="2">
    <source>
        <dbReference type="SAM" id="MobiDB-lite"/>
    </source>
</evidence>
<evidence type="ECO:0000305" key="3"/>
<sequence length="58" mass="6847">MSEIKVGENESLENALRRFKKKCARAGVLSEVRKREHYEKPSVKKKKKSEAARKRKFK</sequence>
<keyword id="KW-1185">Reference proteome</keyword>
<keyword id="KW-0687">Ribonucleoprotein</keyword>
<keyword id="KW-0689">Ribosomal protein</keyword>
<proteinExistence type="inferred from homology"/>
<protein>
    <recommendedName>
        <fullName evidence="1">Small ribosomal subunit protein bS21</fullName>
    </recommendedName>
    <alternativeName>
        <fullName evidence="3">30S ribosomal protein S21</fullName>
    </alternativeName>
</protein>
<organism>
    <name type="scientific">Clostridium botulinum (strain Hall / ATCC 3502 / NCTC 13319 / Type A)</name>
    <dbReference type="NCBI Taxonomy" id="441771"/>
    <lineage>
        <taxon>Bacteria</taxon>
        <taxon>Bacillati</taxon>
        <taxon>Bacillota</taxon>
        <taxon>Clostridia</taxon>
        <taxon>Eubacteriales</taxon>
        <taxon>Clostridiaceae</taxon>
        <taxon>Clostridium</taxon>
    </lineage>
</organism>
<reference key="1">
    <citation type="journal article" date="2007" name="Genome Res.">
        <title>Genome sequence of a proteolytic (Group I) Clostridium botulinum strain Hall A and comparative analysis of the clostridial genomes.</title>
        <authorList>
            <person name="Sebaihia M."/>
            <person name="Peck M.W."/>
            <person name="Minton N.P."/>
            <person name="Thomson N.R."/>
            <person name="Holden M.T.G."/>
            <person name="Mitchell W.J."/>
            <person name="Carter A.T."/>
            <person name="Bentley S.D."/>
            <person name="Mason D.R."/>
            <person name="Crossman L."/>
            <person name="Paul C.J."/>
            <person name="Ivens A."/>
            <person name="Wells-Bennik M.H.J."/>
            <person name="Davis I.J."/>
            <person name="Cerdeno-Tarraga A.M."/>
            <person name="Churcher C."/>
            <person name="Quail M.A."/>
            <person name="Chillingworth T."/>
            <person name="Feltwell T."/>
            <person name="Fraser A."/>
            <person name="Goodhead I."/>
            <person name="Hance Z."/>
            <person name="Jagels K."/>
            <person name="Larke N."/>
            <person name="Maddison M."/>
            <person name="Moule S."/>
            <person name="Mungall K."/>
            <person name="Norbertczak H."/>
            <person name="Rabbinowitsch E."/>
            <person name="Sanders M."/>
            <person name="Simmonds M."/>
            <person name="White B."/>
            <person name="Whithead S."/>
            <person name="Parkhill J."/>
        </authorList>
    </citation>
    <scope>NUCLEOTIDE SEQUENCE [LARGE SCALE GENOMIC DNA]</scope>
    <source>
        <strain>Hall / ATCC 3502 / NCTC 13319 / Type A</strain>
    </source>
</reference>
<reference key="2">
    <citation type="journal article" date="2007" name="PLoS ONE">
        <title>Analysis of the neurotoxin complex genes in Clostridium botulinum A1-A4 and B1 strains: BoNT/A3, /Ba4 and /B1 clusters are located within plasmids.</title>
        <authorList>
            <person name="Smith T.J."/>
            <person name="Hill K.K."/>
            <person name="Foley B.T."/>
            <person name="Detter J.C."/>
            <person name="Munk A.C."/>
            <person name="Bruce D.C."/>
            <person name="Doggett N.A."/>
            <person name="Smith L.A."/>
            <person name="Marks J.D."/>
            <person name="Xie G."/>
            <person name="Brettin T.S."/>
        </authorList>
    </citation>
    <scope>NUCLEOTIDE SEQUENCE [LARGE SCALE GENOMIC DNA]</scope>
    <source>
        <strain>Hall / ATCC 3502 / NCTC 13319 / Type A</strain>
    </source>
</reference>